<proteinExistence type="inferred from homology"/>
<dbReference type="EC" id="6.3.5.7" evidence="1"/>
<dbReference type="EMBL" id="CT971583">
    <property type="protein sequence ID" value="CAK23492.1"/>
    <property type="molecule type" value="Genomic_DNA"/>
</dbReference>
<dbReference type="SMR" id="A5GKM7"/>
<dbReference type="STRING" id="32051.SynWH7803_1066"/>
<dbReference type="KEGG" id="syx:SynWH7803_1066"/>
<dbReference type="eggNOG" id="COG0154">
    <property type="taxonomic scope" value="Bacteria"/>
</dbReference>
<dbReference type="HOGENOM" id="CLU_009600_0_3_3"/>
<dbReference type="OrthoDB" id="9811471at2"/>
<dbReference type="Proteomes" id="UP000001566">
    <property type="component" value="Chromosome"/>
</dbReference>
<dbReference type="GO" id="GO:0030956">
    <property type="term" value="C:glutamyl-tRNA(Gln) amidotransferase complex"/>
    <property type="evidence" value="ECO:0007669"/>
    <property type="project" value="InterPro"/>
</dbReference>
<dbReference type="GO" id="GO:0005524">
    <property type="term" value="F:ATP binding"/>
    <property type="evidence" value="ECO:0007669"/>
    <property type="project" value="UniProtKB-KW"/>
</dbReference>
<dbReference type="GO" id="GO:0050567">
    <property type="term" value="F:glutaminyl-tRNA synthase (glutamine-hydrolyzing) activity"/>
    <property type="evidence" value="ECO:0007669"/>
    <property type="project" value="UniProtKB-UniRule"/>
</dbReference>
<dbReference type="GO" id="GO:0006412">
    <property type="term" value="P:translation"/>
    <property type="evidence" value="ECO:0007669"/>
    <property type="project" value="UniProtKB-UniRule"/>
</dbReference>
<dbReference type="Gene3D" id="3.90.1300.10">
    <property type="entry name" value="Amidase signature (AS) domain"/>
    <property type="match status" value="1"/>
</dbReference>
<dbReference type="HAMAP" id="MF_00120">
    <property type="entry name" value="GatA"/>
    <property type="match status" value="1"/>
</dbReference>
<dbReference type="InterPro" id="IPR000120">
    <property type="entry name" value="Amidase"/>
</dbReference>
<dbReference type="InterPro" id="IPR020556">
    <property type="entry name" value="Amidase_CS"/>
</dbReference>
<dbReference type="InterPro" id="IPR023631">
    <property type="entry name" value="Amidase_dom"/>
</dbReference>
<dbReference type="InterPro" id="IPR036928">
    <property type="entry name" value="AS_sf"/>
</dbReference>
<dbReference type="InterPro" id="IPR004412">
    <property type="entry name" value="GatA"/>
</dbReference>
<dbReference type="NCBIfam" id="TIGR00132">
    <property type="entry name" value="gatA"/>
    <property type="match status" value="1"/>
</dbReference>
<dbReference type="PANTHER" id="PTHR11895:SF151">
    <property type="entry name" value="GLUTAMYL-TRNA(GLN) AMIDOTRANSFERASE SUBUNIT A"/>
    <property type="match status" value="1"/>
</dbReference>
<dbReference type="PANTHER" id="PTHR11895">
    <property type="entry name" value="TRANSAMIDASE"/>
    <property type="match status" value="1"/>
</dbReference>
<dbReference type="Pfam" id="PF01425">
    <property type="entry name" value="Amidase"/>
    <property type="match status" value="1"/>
</dbReference>
<dbReference type="PIRSF" id="PIRSF001221">
    <property type="entry name" value="Amidase_fungi"/>
    <property type="match status" value="1"/>
</dbReference>
<dbReference type="SUPFAM" id="SSF75304">
    <property type="entry name" value="Amidase signature (AS) enzymes"/>
    <property type="match status" value="1"/>
</dbReference>
<dbReference type="PROSITE" id="PS00571">
    <property type="entry name" value="AMIDASES"/>
    <property type="match status" value="1"/>
</dbReference>
<evidence type="ECO:0000255" key="1">
    <source>
        <dbReference type="HAMAP-Rule" id="MF_00120"/>
    </source>
</evidence>
<feature type="chain" id="PRO_1000015921" description="Glutamyl-tRNA(Gln) amidotransferase subunit A">
    <location>
        <begin position="1"/>
        <end position="487"/>
    </location>
</feature>
<feature type="active site" description="Charge relay system" evidence="1">
    <location>
        <position position="74"/>
    </location>
</feature>
<feature type="active site" description="Charge relay system" evidence="1">
    <location>
        <position position="149"/>
    </location>
</feature>
<feature type="active site" description="Acyl-ester intermediate" evidence="1">
    <location>
        <position position="173"/>
    </location>
</feature>
<reference key="1">
    <citation type="submission" date="2006-05" db="EMBL/GenBank/DDBJ databases">
        <authorList>
            <consortium name="Genoscope"/>
        </authorList>
    </citation>
    <scope>NUCLEOTIDE SEQUENCE [LARGE SCALE GENOMIC DNA]</scope>
    <source>
        <strain>WH7803</strain>
    </source>
</reference>
<name>GATA_SYNPW</name>
<keyword id="KW-0067">ATP-binding</keyword>
<keyword id="KW-0436">Ligase</keyword>
<keyword id="KW-0547">Nucleotide-binding</keyword>
<keyword id="KW-0648">Protein biosynthesis</keyword>
<keyword id="KW-1185">Reference proteome</keyword>
<protein>
    <recommendedName>
        <fullName evidence="1">Glutamyl-tRNA(Gln) amidotransferase subunit A</fullName>
        <shortName evidence="1">Glu-ADT subunit A</shortName>
        <ecNumber evidence="1">6.3.5.7</ecNumber>
    </recommendedName>
</protein>
<comment type="function">
    <text evidence="1">Allows the formation of correctly charged Gln-tRNA(Gln) through the transamidation of misacylated Glu-tRNA(Gln) in organisms which lack glutaminyl-tRNA synthetase. The reaction takes place in the presence of glutamine and ATP through an activated gamma-phospho-Glu-tRNA(Gln).</text>
</comment>
<comment type="catalytic activity">
    <reaction evidence="1">
        <text>L-glutamyl-tRNA(Gln) + L-glutamine + ATP + H2O = L-glutaminyl-tRNA(Gln) + L-glutamate + ADP + phosphate + H(+)</text>
        <dbReference type="Rhea" id="RHEA:17521"/>
        <dbReference type="Rhea" id="RHEA-COMP:9681"/>
        <dbReference type="Rhea" id="RHEA-COMP:9684"/>
        <dbReference type="ChEBI" id="CHEBI:15377"/>
        <dbReference type="ChEBI" id="CHEBI:15378"/>
        <dbReference type="ChEBI" id="CHEBI:29985"/>
        <dbReference type="ChEBI" id="CHEBI:30616"/>
        <dbReference type="ChEBI" id="CHEBI:43474"/>
        <dbReference type="ChEBI" id="CHEBI:58359"/>
        <dbReference type="ChEBI" id="CHEBI:78520"/>
        <dbReference type="ChEBI" id="CHEBI:78521"/>
        <dbReference type="ChEBI" id="CHEBI:456216"/>
        <dbReference type="EC" id="6.3.5.7"/>
    </reaction>
</comment>
<comment type="subunit">
    <text evidence="1">Heterotrimer of A, B and C subunits.</text>
</comment>
<comment type="similarity">
    <text evidence="1">Belongs to the amidase family. GatA subfamily.</text>
</comment>
<gene>
    <name evidence="1" type="primary">gatA</name>
    <name type="ordered locus">SynWH7803_1066</name>
</gene>
<sequence>MAIAEWRQQLANGEVSARELTDHHLARIEAVEPGIHAFLEVTAERARADADRVDEARASGEDLPPLAGIPLAIKDNLCTRGVRTTCSSRMLEQFVPPYESTVTERLWAAGAVLLGKTNLDEFAMGGSTETSAFGPTANPWNPEHVPGGSSGGSAAAVASGECLASIGSDTGGSIRQPASFCGVVGLKPTYGRISRYGLVAFASSLDQVGPFSHSVADAAELLQVMAGADPRDSTCLNAPVPDYCAALGRPVEGLKVGLVKECFEQEGLDPQVKASVLAAAQQLQALGADLVDVSCPRFNDGIATYYVIAPSEASANLARYDGVKYGYRAEDAASLAAMTARSRAEGFGSEVQRRILIGTYALSAGYVDAYYKKAQQVRTLIRRDFDAAFQSVDVLLTPTAPGTAFRNGAHADDPLAMYLSDLLTIPANLAGLPAISVPCGFDTGGLPIGVQLIGNVLEEPLLLQVAHQFEQAADVMKTRPEAAFIPG</sequence>
<organism>
    <name type="scientific">Synechococcus sp. (strain WH7803)</name>
    <dbReference type="NCBI Taxonomy" id="32051"/>
    <lineage>
        <taxon>Bacteria</taxon>
        <taxon>Bacillati</taxon>
        <taxon>Cyanobacteriota</taxon>
        <taxon>Cyanophyceae</taxon>
        <taxon>Synechococcales</taxon>
        <taxon>Synechococcaceae</taxon>
        <taxon>Synechococcus</taxon>
    </lineage>
</organism>
<accession>A5GKM7</accession>